<proteinExistence type="inferred from homology"/>
<comment type="function">
    <text evidence="2">Plays an essential role in viral RNA transcription and replication by forming the heterotrimeric polymerase complex together with PB1 and PB2 subunits. The complex transcribes viral mRNAs by using a unique mechanism called cap-snatching. It consists in the hijacking and cleavage of host capped pre-mRNAs. These short capped RNAs are then used as primers for viral mRNAs. The PB2 subunit is responsible for the binding of the 5' cap of cellular pre-mRNAs which are subsequently cleaved after 10-13 nucleotides by the PA subunit that carries the endonuclease activity.</text>
</comment>
<comment type="cofactor">
    <cofactor evidence="2">
        <name>Mn(2+)</name>
        <dbReference type="ChEBI" id="CHEBI:29035"/>
    </cofactor>
    <text evidence="2">Binds 2 manganese ions per subunit.</text>
</comment>
<comment type="subunit">
    <text evidence="1 2">Influenza RNA polymerase is composed of three subunits: PB1, PB2 and PA. Interacts (via C-terminus) with PB1 (via N-terminus).</text>
</comment>
<comment type="subcellular location">
    <subcellularLocation>
        <location evidence="2">Host cytoplasm</location>
    </subcellularLocation>
    <subcellularLocation>
        <location evidence="2">Host nucleus</location>
    </subcellularLocation>
    <text evidence="1 2">PB1 and PA are transported in the host nucleus as a complex.</text>
</comment>
<comment type="alternative products">
    <event type="ribosomal frameshifting"/>
    <isoform>
        <id>P13171-1</id>
        <name>PA</name>
        <sequence type="displayed"/>
    </isoform>
    <isoform>
        <id>P0DJT8-1</id>
        <name>PA-X</name>
        <sequence type="external"/>
    </isoform>
</comment>
<comment type="PTM">
    <text evidence="1 2">Phosphorylated on serines and threonines by host kinases, including human casein kinase II.</text>
</comment>
<comment type="similarity">
    <text evidence="2">Belongs to the influenza viruses PA family.</text>
</comment>
<dbReference type="EC" id="3.1.-.-" evidence="2"/>
<dbReference type="EMBL" id="M26085">
    <property type="protein sequence ID" value="AAA43615.1"/>
    <property type="molecule type" value="Genomic_RNA"/>
</dbReference>
<dbReference type="SMR" id="P13171"/>
<dbReference type="MEROPS" id="S62.001"/>
<dbReference type="GO" id="GO:0030430">
    <property type="term" value="C:host cell cytoplasm"/>
    <property type="evidence" value="ECO:0007669"/>
    <property type="project" value="UniProtKB-SubCell"/>
</dbReference>
<dbReference type="GO" id="GO:0042025">
    <property type="term" value="C:host cell nucleus"/>
    <property type="evidence" value="ECO:0007669"/>
    <property type="project" value="UniProtKB-SubCell"/>
</dbReference>
<dbReference type="GO" id="GO:0004519">
    <property type="term" value="F:endonuclease activity"/>
    <property type="evidence" value="ECO:0007669"/>
    <property type="project" value="UniProtKB-KW"/>
</dbReference>
<dbReference type="GO" id="GO:0046872">
    <property type="term" value="F:metal ion binding"/>
    <property type="evidence" value="ECO:0007669"/>
    <property type="project" value="UniProtKB-KW"/>
</dbReference>
<dbReference type="GO" id="GO:0003723">
    <property type="term" value="F:RNA binding"/>
    <property type="evidence" value="ECO:0007669"/>
    <property type="project" value="UniProtKB-UniRule"/>
</dbReference>
<dbReference type="GO" id="GO:0075526">
    <property type="term" value="P:cap snatching"/>
    <property type="evidence" value="ECO:0007669"/>
    <property type="project" value="UniProtKB-UniRule"/>
</dbReference>
<dbReference type="GO" id="GO:0006351">
    <property type="term" value="P:DNA-templated transcription"/>
    <property type="evidence" value="ECO:0007669"/>
    <property type="project" value="UniProtKB-UniRule"/>
</dbReference>
<dbReference type="GO" id="GO:0039657">
    <property type="term" value="P:symbiont-mediated suppression of host gene expression"/>
    <property type="evidence" value="ECO:0007669"/>
    <property type="project" value="UniProtKB-KW"/>
</dbReference>
<dbReference type="GO" id="GO:0039523">
    <property type="term" value="P:symbiont-mediated suppression of host mRNA transcription via inhibition of RNA polymerase II activity"/>
    <property type="evidence" value="ECO:0007669"/>
    <property type="project" value="UniProtKB-UniRule"/>
</dbReference>
<dbReference type="GO" id="GO:0039694">
    <property type="term" value="P:viral RNA genome replication"/>
    <property type="evidence" value="ECO:0007669"/>
    <property type="project" value="InterPro"/>
</dbReference>
<dbReference type="GO" id="GO:0075523">
    <property type="term" value="P:viral translational frameshifting"/>
    <property type="evidence" value="ECO:0007669"/>
    <property type="project" value="UniProtKB-KW"/>
</dbReference>
<dbReference type="FunFam" id="3.40.91.90:FF:000001">
    <property type="entry name" value="Polymerase acidic protein"/>
    <property type="match status" value="1"/>
</dbReference>
<dbReference type="Gene3D" id="3.40.91.90">
    <property type="entry name" value="Influenza RNA-dependent RNA polymerase subunit PA, endonuclease domain"/>
    <property type="match status" value="1"/>
</dbReference>
<dbReference type="HAMAP" id="MF_04063">
    <property type="entry name" value="INFV_PA"/>
    <property type="match status" value="1"/>
</dbReference>
<dbReference type="InterPro" id="IPR037534">
    <property type="entry name" value="INFV_PA"/>
</dbReference>
<dbReference type="InterPro" id="IPR001009">
    <property type="entry name" value="PA/PA-X"/>
</dbReference>
<dbReference type="InterPro" id="IPR038372">
    <property type="entry name" value="PA/PA-X_sf"/>
</dbReference>
<dbReference type="Pfam" id="PF00603">
    <property type="entry name" value="Flu_PA"/>
    <property type="match status" value="1"/>
</dbReference>
<organism>
    <name type="scientific">Influenza A virus (strain A/Pintail/Alberta/119/1979 H4N6)</name>
    <dbReference type="NCBI Taxonomy" id="384504"/>
    <lineage>
        <taxon>Viruses</taxon>
        <taxon>Riboviria</taxon>
        <taxon>Orthornavirae</taxon>
        <taxon>Negarnaviricota</taxon>
        <taxon>Polyploviricotina</taxon>
        <taxon>Insthoviricetes</taxon>
        <taxon>Articulavirales</taxon>
        <taxon>Orthomyxoviridae</taxon>
        <taxon>Alphainfluenzavirus</taxon>
        <taxon>Alphainfluenzavirus influenzae</taxon>
        <taxon>Influenza A virus</taxon>
    </lineage>
</organism>
<protein>
    <recommendedName>
        <fullName evidence="2">Polymerase acidic protein</fullName>
        <ecNumber evidence="2">3.1.-.-</ecNumber>
    </recommendedName>
    <alternativeName>
        <fullName evidence="2">RNA-directed RNA polymerase subunit P2</fullName>
    </alternativeName>
</protein>
<gene>
    <name evidence="2" type="primary">PA</name>
</gene>
<reference key="1">
    <citation type="journal article" date="1989" name="Virology">
        <title>Evolutionary pathways of the PA genes of influenza A viruses.</title>
        <authorList>
            <person name="Okazaki K."/>
            <person name="Kawaoka Y."/>
            <person name="Webster R.G."/>
        </authorList>
    </citation>
    <scope>NUCLEOTIDE SEQUENCE [GENOMIC RNA]</scope>
</reference>
<accession>P13171</accession>
<name>PA_I79A1</name>
<feature type="chain" id="PRO_0000078795" description="Polymerase acidic protein">
    <location>
        <begin position="1"/>
        <end position="716"/>
    </location>
</feature>
<feature type="short sequence motif" description="Nuclear localization signal 1 (NLS1)" evidence="1 2">
    <location>
        <begin position="124"/>
        <end position="139"/>
    </location>
</feature>
<feature type="short sequence motif" description="Nuclear localization signal 2 (NLS2)" evidence="1 2">
    <location>
        <begin position="184"/>
        <end position="247"/>
    </location>
</feature>
<feature type="binding site" evidence="2">
    <location>
        <position position="41"/>
    </location>
    <ligand>
        <name>Mn(2+)</name>
        <dbReference type="ChEBI" id="CHEBI:29035"/>
        <label>1</label>
    </ligand>
</feature>
<feature type="binding site" evidence="2">
    <location>
        <position position="80"/>
    </location>
    <ligand>
        <name>Mn(2+)</name>
        <dbReference type="ChEBI" id="CHEBI:29035"/>
        <label>2</label>
    </ligand>
</feature>
<feature type="binding site" evidence="2">
    <location>
        <position position="108"/>
    </location>
    <ligand>
        <name>Mn(2+)</name>
        <dbReference type="ChEBI" id="CHEBI:29035"/>
        <label>1</label>
    </ligand>
</feature>
<feature type="binding site" evidence="2">
    <location>
        <position position="108"/>
    </location>
    <ligand>
        <name>Mn(2+)</name>
        <dbReference type="ChEBI" id="CHEBI:29035"/>
        <label>2</label>
    </ligand>
</feature>
<feature type="binding site" evidence="2">
    <location>
        <position position="119"/>
    </location>
    <ligand>
        <name>Mn(2+)</name>
        <dbReference type="ChEBI" id="CHEBI:29035"/>
        <label>1</label>
    </ligand>
</feature>
<feature type="binding site" evidence="2">
    <location>
        <position position="120"/>
    </location>
    <ligand>
        <name>Mn(2+)</name>
        <dbReference type="ChEBI" id="CHEBI:29035"/>
        <label>1</label>
    </ligand>
</feature>
<sequence>MEDFVRQCFNPMIVELAEKAMKEYGEDPKIETNKFAAICTHLEVCFMYSDFHFIDERGESIIVESGDPNALLKHRFEIMEGRDRTMAWTVVNSICNTTGVEKPKFLPDLYDYKENRFIEIGVTRREVHIYYLEKANKIKSEKTHIHIFSFTGEEMATKADYTLDEESRARIKTRLFTIRQEMASRGLWDSFRQSERGEETIEERFEITGTMRRLADQSLPPNFSSIENFRAYVDGFEPNGCIEGKLSQMSKEVNARIEPFLKTTPRPLRLPDGPPCSQRSKFLLMDALKLSIEDPSHEGEGIPLYDAIKCMKTFFGWKEPNIIKPHEKGINPNYLLAWKQVLAELQDIENEEKIPKTKNMKKTSQLKWALGENMAPEKVDFEDCKDVSDLKQYDSDEPDTRSLASWIQSEFNKACELTDSSWIELDEIGEDVAPIEHIASMRRNYFTAEVSHCRATEYIMKGVYINTALLNASCAAMDDFQVIPMISKCRTKEGRRKTNLYGFIIKGRSHLRNDTDVVNFVSMEFSLTDPRLEPHKWEKYCVLEIGDMLLRTAIGQVSRPMFLYVRTNGTSKIKMKWGMEMRRCLLQSLQQIESMIEAESSVKEKDMTKEFFENKSETWPIGESPKGVEEGSIGKVCRTLLAKSVFNSLYASPQLEGFSAESRKLLLIVQALRDNLEPGTFDLGGLYEAIEECLINDPWVLLNASWFNSFLTHALK</sequence>
<organismHost>
    <name type="scientific">Aves</name>
    <dbReference type="NCBI Taxonomy" id="8782"/>
</organismHost>
<organismHost>
    <name type="scientific">Sus scrofa</name>
    <name type="common">Pig</name>
    <dbReference type="NCBI Taxonomy" id="9823"/>
</organismHost>
<keyword id="KW-1157">Cap snatching</keyword>
<keyword id="KW-0255">Endonuclease</keyword>
<keyword id="KW-1262">Eukaryotic host gene expression shutoff by virus</keyword>
<keyword id="KW-1191">Eukaryotic host transcription shutoff by virus</keyword>
<keyword id="KW-1035">Host cytoplasm</keyword>
<keyword id="KW-1190">Host gene expression shutoff by virus</keyword>
<keyword id="KW-1048">Host nucleus</keyword>
<keyword id="KW-0945">Host-virus interaction</keyword>
<keyword id="KW-0378">Hydrolase</keyword>
<keyword id="KW-1104">Inhibition of host RNA polymerase II by virus</keyword>
<keyword id="KW-0464">Manganese</keyword>
<keyword id="KW-0479">Metal-binding</keyword>
<keyword id="KW-0540">Nuclease</keyword>
<keyword id="KW-0597">Phosphoprotein</keyword>
<keyword id="KW-0688">Ribosomal frameshifting</keyword>
<evidence type="ECO:0000250" key="1">
    <source>
        <dbReference type="UniProtKB" id="P03433"/>
    </source>
</evidence>
<evidence type="ECO:0000255" key="2">
    <source>
        <dbReference type="HAMAP-Rule" id="MF_04063"/>
    </source>
</evidence>